<keyword id="KW-0378">Hydrolase</keyword>
<reference key="1">
    <citation type="journal article" date="1998" name="Mol. Microbiol.">
        <title>The type II O-antigenic polysaccharide moiety of Burkholderia pseudomallei lipopolysaccharide is required for serum resistance and virulence.</title>
        <authorList>
            <person name="DeShazer D."/>
            <person name="Brett P.J."/>
            <person name="Woods D.E."/>
        </authorList>
    </citation>
    <scope>NUCLEOTIDE SEQUENCE [GENOMIC DNA]</scope>
    <source>
        <strain>1026b</strain>
    </source>
</reference>
<reference key="2">
    <citation type="journal article" date="2012" name="PLoS ONE">
        <title>Evolution of Burkholderia pseudomallei in recurrent melioidosis.</title>
        <authorList>
            <person name="Hayden H.S."/>
            <person name="Lim R."/>
            <person name="Brittnacher M.J."/>
            <person name="Sims E.H."/>
            <person name="Ramage E.R."/>
            <person name="Fong C."/>
            <person name="Wu Z."/>
            <person name="Crist E."/>
            <person name="Chang J."/>
            <person name="Zhou Y."/>
            <person name="Radey M."/>
            <person name="Rohmer L."/>
            <person name="Haugen E."/>
            <person name="Gillett W."/>
            <person name="Wuthiekanun V."/>
            <person name="Peacock S.J."/>
            <person name="Kaul R."/>
            <person name="Miller S.I."/>
            <person name="Manoil C."/>
            <person name="Jacobs M.A."/>
        </authorList>
    </citation>
    <scope>NUCLEOTIDE SEQUENCE [LARGE SCALE GENOMIC DNA]</scope>
    <source>
        <strain>1026b</strain>
    </source>
</reference>
<feature type="chain" id="PRO_0000429784" description="Bis(5'-nucleosyl)-tetraphosphatase, symmetrical">
    <location>
        <begin position="1"/>
        <end position="282"/>
    </location>
</feature>
<protein>
    <recommendedName>
        <fullName evidence="1">Bis(5'-nucleosyl)-tetraphosphatase, symmetrical</fullName>
        <ecNumber evidence="1">3.6.1.41</ecNumber>
    </recommendedName>
    <alternativeName>
        <fullName evidence="1">Ap4A hydrolase</fullName>
    </alternativeName>
    <alternativeName>
        <fullName evidence="1">Diadenosine 5',5'''-P1,P4-tetraphosphate pyrophosphohydrolase</fullName>
    </alternativeName>
    <alternativeName>
        <fullName evidence="1">Diadenosine tetraphosphatase</fullName>
    </alternativeName>
</protein>
<evidence type="ECO:0000255" key="1">
    <source>
        <dbReference type="HAMAP-Rule" id="MF_00199"/>
    </source>
</evidence>
<comment type="function">
    <text evidence="1">Hydrolyzes diadenosine 5',5'''-P1,P4-tetraphosphate to yield ADP.</text>
</comment>
<comment type="catalytic activity">
    <reaction evidence="1">
        <text>P(1),P(4)-bis(5'-adenosyl) tetraphosphate + H2O = 2 ADP + 2 H(+)</text>
        <dbReference type="Rhea" id="RHEA:24252"/>
        <dbReference type="ChEBI" id="CHEBI:15377"/>
        <dbReference type="ChEBI" id="CHEBI:15378"/>
        <dbReference type="ChEBI" id="CHEBI:58141"/>
        <dbReference type="ChEBI" id="CHEBI:456216"/>
        <dbReference type="EC" id="3.6.1.41"/>
    </reaction>
</comment>
<comment type="similarity">
    <text evidence="1">Belongs to the Ap4A hydrolase family.</text>
</comment>
<organism>
    <name type="scientific">Burkholderia pseudomallei (strain 1026b)</name>
    <dbReference type="NCBI Taxonomy" id="884204"/>
    <lineage>
        <taxon>Bacteria</taxon>
        <taxon>Pseudomonadati</taxon>
        <taxon>Pseudomonadota</taxon>
        <taxon>Betaproteobacteria</taxon>
        <taxon>Burkholderiales</taxon>
        <taxon>Burkholderiaceae</taxon>
        <taxon>Burkholderia</taxon>
        <taxon>pseudomallei group</taxon>
    </lineage>
</organism>
<sequence>MTNFSSSPPIAFGDLQGCHAAYRQLFDTLAPAADTPLWFAGDLVNRGPASLATLREIVALGERAIAVLGNHDLHLLAVAAGIRTLKPGDTIGEILDAPDADDLIEWVRHRPFAHFERGMLMVHAGLLPQWDAALALELADELQRALRAPNWRDTLRSLYGNDPNCWSPDLKHADRLRVAFNAFTRIRFCTPEGAMEFRANGGPAAAPAGYLPWFDAPGRKTADVTVVFGHWAALGLMLRENLVALDSGCVWGNRLSAVRLADDPAARVVTQVACERCGAADE</sequence>
<name>APAH_BURP2</name>
<dbReference type="EC" id="3.6.1.41" evidence="1"/>
<dbReference type="EMBL" id="AF064070">
    <property type="protein sequence ID" value="AAD05453.1"/>
    <property type="molecule type" value="Genomic_DNA"/>
</dbReference>
<dbReference type="EMBL" id="CP002833">
    <property type="protein sequence ID" value="AFI65296.1"/>
    <property type="molecule type" value="Genomic_DNA"/>
</dbReference>
<dbReference type="RefSeq" id="WP_004522249.1">
    <property type="nucleotide sequence ID" value="NZ_CP004379.1"/>
</dbReference>
<dbReference type="SMR" id="I1WGA2"/>
<dbReference type="KEGG" id="bpz:BP1026B_I0632"/>
<dbReference type="PATRIC" id="fig|884204.3.peg.689"/>
<dbReference type="Proteomes" id="UP000010087">
    <property type="component" value="Chromosome 1"/>
</dbReference>
<dbReference type="GO" id="GO:0008803">
    <property type="term" value="F:bis(5'-nucleosyl)-tetraphosphatase (symmetrical) activity"/>
    <property type="evidence" value="ECO:0007669"/>
    <property type="project" value="UniProtKB-UniRule"/>
</dbReference>
<dbReference type="CDD" id="cd07422">
    <property type="entry name" value="MPP_ApaH"/>
    <property type="match status" value="1"/>
</dbReference>
<dbReference type="Gene3D" id="3.60.21.10">
    <property type="match status" value="1"/>
</dbReference>
<dbReference type="HAMAP" id="MF_00199">
    <property type="entry name" value="ApaH"/>
    <property type="match status" value="1"/>
</dbReference>
<dbReference type="InterPro" id="IPR004617">
    <property type="entry name" value="ApaH"/>
</dbReference>
<dbReference type="InterPro" id="IPR004843">
    <property type="entry name" value="Calcineurin-like_PHP_ApaH"/>
</dbReference>
<dbReference type="InterPro" id="IPR029052">
    <property type="entry name" value="Metallo-depent_PP-like"/>
</dbReference>
<dbReference type="NCBIfam" id="TIGR00668">
    <property type="entry name" value="apaH"/>
    <property type="match status" value="1"/>
</dbReference>
<dbReference type="NCBIfam" id="NF001204">
    <property type="entry name" value="PRK00166.1"/>
    <property type="match status" value="1"/>
</dbReference>
<dbReference type="PANTHER" id="PTHR40942">
    <property type="match status" value="1"/>
</dbReference>
<dbReference type="PANTHER" id="PTHR40942:SF4">
    <property type="entry name" value="CYTOCHROME C5"/>
    <property type="match status" value="1"/>
</dbReference>
<dbReference type="Pfam" id="PF00149">
    <property type="entry name" value="Metallophos"/>
    <property type="match status" value="1"/>
</dbReference>
<dbReference type="PIRSF" id="PIRSF000903">
    <property type="entry name" value="B5n-ttraPtase_sm"/>
    <property type="match status" value="1"/>
</dbReference>
<dbReference type="SUPFAM" id="SSF56300">
    <property type="entry name" value="Metallo-dependent phosphatases"/>
    <property type="match status" value="1"/>
</dbReference>
<gene>
    <name evidence="1" type="primary">apaH</name>
    <name type="ordered locus">BP1026B_I0632</name>
</gene>
<proteinExistence type="inferred from homology"/>
<accession>I1WGA2</accession>
<accession>O69115</accession>
<accession>Q63RI5</accession>